<organism>
    <name type="scientific">Salmonella schwarzengrund (strain CVM19633)</name>
    <dbReference type="NCBI Taxonomy" id="439843"/>
    <lineage>
        <taxon>Bacteria</taxon>
        <taxon>Pseudomonadati</taxon>
        <taxon>Pseudomonadota</taxon>
        <taxon>Gammaproteobacteria</taxon>
        <taxon>Enterobacterales</taxon>
        <taxon>Enterobacteriaceae</taxon>
        <taxon>Salmonella</taxon>
    </lineage>
</organism>
<name>GLO2_SALSV</name>
<sequence length="251" mass="28614">MNLNSIPAFQDNYIWVLTNDEGRCVIVDPGEAAPVLKAIAEHKWMPEAIFLTHHHHDHVGGVKELLQHFPQMTVYGPAETQDKGATHLVGDGDTIRVLGEKFTLFATPGHTLGHVCYFSHPYLFCGDTLFSGGCGRLFEGTPSQMYQSLMKINSLPDDTLICCAHEYTLANIKFALSILPHDSFINEYYRKVKELRVKKQMTLPVILKNERKINLFLRTEDIDLINEINKETILQQPEARFAWLRSKKDTF</sequence>
<dbReference type="EC" id="3.1.2.6" evidence="1"/>
<dbReference type="EMBL" id="CP001127">
    <property type="protein sequence ID" value="ACF90770.1"/>
    <property type="molecule type" value="Genomic_DNA"/>
</dbReference>
<dbReference type="RefSeq" id="WP_001052773.1">
    <property type="nucleotide sequence ID" value="NC_011094.1"/>
</dbReference>
<dbReference type="SMR" id="B4TYG8"/>
<dbReference type="KEGG" id="sew:SeSA_A0291"/>
<dbReference type="HOGENOM" id="CLU_030571_4_1_6"/>
<dbReference type="UniPathway" id="UPA00619">
    <property type="reaction ID" value="UER00676"/>
</dbReference>
<dbReference type="Proteomes" id="UP000001865">
    <property type="component" value="Chromosome"/>
</dbReference>
<dbReference type="GO" id="GO:0004416">
    <property type="term" value="F:hydroxyacylglutathione hydrolase activity"/>
    <property type="evidence" value="ECO:0007669"/>
    <property type="project" value="UniProtKB-UniRule"/>
</dbReference>
<dbReference type="GO" id="GO:0046872">
    <property type="term" value="F:metal ion binding"/>
    <property type="evidence" value="ECO:0007669"/>
    <property type="project" value="UniProtKB-KW"/>
</dbReference>
<dbReference type="GO" id="GO:0019243">
    <property type="term" value="P:methylglyoxal catabolic process to D-lactate via S-lactoyl-glutathione"/>
    <property type="evidence" value="ECO:0007669"/>
    <property type="project" value="InterPro"/>
</dbReference>
<dbReference type="CDD" id="cd07723">
    <property type="entry name" value="hydroxyacylglutathione_hydrolase_MBL-fold"/>
    <property type="match status" value="1"/>
</dbReference>
<dbReference type="Gene3D" id="3.60.15.10">
    <property type="entry name" value="Ribonuclease Z/Hydroxyacylglutathione hydrolase-like"/>
    <property type="match status" value="1"/>
</dbReference>
<dbReference type="HAMAP" id="MF_01374">
    <property type="entry name" value="Glyoxalase_2"/>
    <property type="match status" value="1"/>
</dbReference>
<dbReference type="InterPro" id="IPR035680">
    <property type="entry name" value="Clx_II_MBL"/>
</dbReference>
<dbReference type="InterPro" id="IPR050110">
    <property type="entry name" value="Glyoxalase_II_hydrolase"/>
</dbReference>
<dbReference type="InterPro" id="IPR032282">
    <property type="entry name" value="HAGH_C"/>
</dbReference>
<dbReference type="InterPro" id="IPR017782">
    <property type="entry name" value="Hydroxyacylglutathione_Hdrlase"/>
</dbReference>
<dbReference type="InterPro" id="IPR001279">
    <property type="entry name" value="Metallo-B-lactamas"/>
</dbReference>
<dbReference type="InterPro" id="IPR036866">
    <property type="entry name" value="RibonucZ/Hydroxyglut_hydro"/>
</dbReference>
<dbReference type="NCBIfam" id="TIGR03413">
    <property type="entry name" value="GSH_gloB"/>
    <property type="match status" value="1"/>
</dbReference>
<dbReference type="NCBIfam" id="NF007597">
    <property type="entry name" value="PRK10241.1"/>
    <property type="match status" value="1"/>
</dbReference>
<dbReference type="PANTHER" id="PTHR43705">
    <property type="entry name" value="HYDROXYACYLGLUTATHIONE HYDROLASE"/>
    <property type="match status" value="1"/>
</dbReference>
<dbReference type="PANTHER" id="PTHR43705:SF1">
    <property type="entry name" value="HYDROXYACYLGLUTATHIONE HYDROLASE GLOB"/>
    <property type="match status" value="1"/>
</dbReference>
<dbReference type="Pfam" id="PF16123">
    <property type="entry name" value="HAGH_C"/>
    <property type="match status" value="1"/>
</dbReference>
<dbReference type="Pfam" id="PF00753">
    <property type="entry name" value="Lactamase_B"/>
    <property type="match status" value="1"/>
</dbReference>
<dbReference type="PIRSF" id="PIRSF005457">
    <property type="entry name" value="Glx"/>
    <property type="match status" value="1"/>
</dbReference>
<dbReference type="SMART" id="SM00849">
    <property type="entry name" value="Lactamase_B"/>
    <property type="match status" value="1"/>
</dbReference>
<dbReference type="SUPFAM" id="SSF56281">
    <property type="entry name" value="Metallo-hydrolase/oxidoreductase"/>
    <property type="match status" value="1"/>
</dbReference>
<feature type="chain" id="PRO_1000144801" description="Hydroxyacylglutathione hydrolase">
    <location>
        <begin position="1"/>
        <end position="251"/>
    </location>
</feature>
<feature type="binding site" evidence="1">
    <location>
        <position position="53"/>
    </location>
    <ligand>
        <name>Zn(2+)</name>
        <dbReference type="ChEBI" id="CHEBI:29105"/>
        <label>1</label>
    </ligand>
</feature>
<feature type="binding site" evidence="1">
    <location>
        <position position="55"/>
    </location>
    <ligand>
        <name>Zn(2+)</name>
        <dbReference type="ChEBI" id="CHEBI:29105"/>
        <label>1</label>
    </ligand>
</feature>
<feature type="binding site" evidence="1">
    <location>
        <position position="57"/>
    </location>
    <ligand>
        <name>Zn(2+)</name>
        <dbReference type="ChEBI" id="CHEBI:29105"/>
        <label>2</label>
    </ligand>
</feature>
<feature type="binding site" evidence="1">
    <location>
        <position position="58"/>
    </location>
    <ligand>
        <name>Zn(2+)</name>
        <dbReference type="ChEBI" id="CHEBI:29105"/>
        <label>2</label>
    </ligand>
</feature>
<feature type="binding site" evidence="1">
    <location>
        <position position="110"/>
    </location>
    <ligand>
        <name>Zn(2+)</name>
        <dbReference type="ChEBI" id="CHEBI:29105"/>
        <label>1</label>
    </ligand>
</feature>
<feature type="binding site" evidence="1">
    <location>
        <position position="127"/>
    </location>
    <ligand>
        <name>Zn(2+)</name>
        <dbReference type="ChEBI" id="CHEBI:29105"/>
        <label>1</label>
    </ligand>
</feature>
<feature type="binding site" evidence="1">
    <location>
        <position position="127"/>
    </location>
    <ligand>
        <name>Zn(2+)</name>
        <dbReference type="ChEBI" id="CHEBI:29105"/>
        <label>2</label>
    </ligand>
</feature>
<feature type="binding site" evidence="1">
    <location>
        <position position="165"/>
    </location>
    <ligand>
        <name>Zn(2+)</name>
        <dbReference type="ChEBI" id="CHEBI:29105"/>
        <label>2</label>
    </ligand>
</feature>
<evidence type="ECO:0000255" key="1">
    <source>
        <dbReference type="HAMAP-Rule" id="MF_01374"/>
    </source>
</evidence>
<accession>B4TYG8</accession>
<keyword id="KW-0378">Hydrolase</keyword>
<keyword id="KW-0479">Metal-binding</keyword>
<keyword id="KW-0862">Zinc</keyword>
<reference key="1">
    <citation type="journal article" date="2011" name="J. Bacteriol.">
        <title>Comparative genomics of 28 Salmonella enterica isolates: evidence for CRISPR-mediated adaptive sublineage evolution.</title>
        <authorList>
            <person name="Fricke W.F."/>
            <person name="Mammel M.K."/>
            <person name="McDermott P.F."/>
            <person name="Tartera C."/>
            <person name="White D.G."/>
            <person name="Leclerc J.E."/>
            <person name="Ravel J."/>
            <person name="Cebula T.A."/>
        </authorList>
    </citation>
    <scope>NUCLEOTIDE SEQUENCE [LARGE SCALE GENOMIC DNA]</scope>
    <source>
        <strain>CVM19633</strain>
    </source>
</reference>
<gene>
    <name evidence="1" type="primary">gloB</name>
    <name type="ordered locus">SeSA_A0291</name>
</gene>
<proteinExistence type="inferred from homology"/>
<protein>
    <recommendedName>
        <fullName evidence="1">Hydroxyacylglutathione hydrolase</fullName>
        <ecNumber evidence="1">3.1.2.6</ecNumber>
    </recommendedName>
    <alternativeName>
        <fullName evidence="1">Glyoxalase II</fullName>
        <shortName evidence="1">Glx II</shortName>
    </alternativeName>
</protein>
<comment type="function">
    <text evidence="1">Thiolesterase that catalyzes the hydrolysis of S-D-lactoyl-glutathione to form glutathione and D-lactic acid.</text>
</comment>
<comment type="catalytic activity">
    <reaction evidence="1">
        <text>an S-(2-hydroxyacyl)glutathione + H2O = a 2-hydroxy carboxylate + glutathione + H(+)</text>
        <dbReference type="Rhea" id="RHEA:21864"/>
        <dbReference type="ChEBI" id="CHEBI:15377"/>
        <dbReference type="ChEBI" id="CHEBI:15378"/>
        <dbReference type="ChEBI" id="CHEBI:57925"/>
        <dbReference type="ChEBI" id="CHEBI:58896"/>
        <dbReference type="ChEBI" id="CHEBI:71261"/>
        <dbReference type="EC" id="3.1.2.6"/>
    </reaction>
</comment>
<comment type="cofactor">
    <cofactor evidence="1">
        <name>Zn(2+)</name>
        <dbReference type="ChEBI" id="CHEBI:29105"/>
    </cofactor>
    <text evidence="1">Binds 2 Zn(2+) ions per subunit.</text>
</comment>
<comment type="pathway">
    <text evidence="1">Secondary metabolite metabolism; methylglyoxal degradation; (R)-lactate from methylglyoxal: step 2/2.</text>
</comment>
<comment type="subunit">
    <text evidence="1">Monomer.</text>
</comment>
<comment type="similarity">
    <text evidence="1">Belongs to the metallo-beta-lactamase superfamily. Glyoxalase II family.</text>
</comment>